<dbReference type="EMBL" id="FJ959161">
    <property type="protein sequence ID" value="ADB93131.1"/>
    <property type="molecule type" value="Genomic_DNA"/>
</dbReference>
<dbReference type="SMR" id="D6C4L9"/>
<dbReference type="ConoServer" id="4045">
    <property type="toxin name" value="Cal9.5 precursor"/>
</dbReference>
<dbReference type="GO" id="GO:0005576">
    <property type="term" value="C:extracellular region"/>
    <property type="evidence" value="ECO:0007669"/>
    <property type="project" value="UniProtKB-SubCell"/>
</dbReference>
<dbReference type="GO" id="GO:0090729">
    <property type="term" value="F:toxin activity"/>
    <property type="evidence" value="ECO:0007669"/>
    <property type="project" value="UniProtKB-KW"/>
</dbReference>
<sequence length="73" mass="8182">MSKLVILAVLVLLPLVTAEHGRDEQAMQPEKKTMWTLWSLTRRGECDGKKDCITNDDCTGCLCSDFGSYRKCA</sequence>
<evidence type="ECO:0000250" key="1"/>
<evidence type="ECO:0000255" key="2"/>
<protein>
    <recommendedName>
        <fullName>Conotoxin Cl9.2</fullName>
    </recommendedName>
</protein>
<keyword id="KW-0165">Cleavage on pair of basic residues</keyword>
<keyword id="KW-1015">Disulfide bond</keyword>
<keyword id="KW-0528">Neurotoxin</keyword>
<keyword id="KW-0964">Secreted</keyword>
<keyword id="KW-0732">Signal</keyword>
<keyword id="KW-0800">Toxin</keyword>
<feature type="signal peptide" evidence="2">
    <location>
        <begin position="1"/>
        <end position="18"/>
    </location>
</feature>
<feature type="propeptide" id="PRO_0000415039" evidence="1">
    <location>
        <begin position="19"/>
        <end position="41"/>
    </location>
</feature>
<feature type="peptide" id="PRO_0000415040" description="Conotoxin Cl9.2">
    <location>
        <begin position="44"/>
        <end position="73"/>
    </location>
</feature>
<feature type="disulfide bond" evidence="1">
    <location>
        <begin position="46"/>
        <end position="61"/>
    </location>
</feature>
<feature type="disulfide bond" evidence="1">
    <location>
        <begin position="52"/>
        <end position="63"/>
    </location>
</feature>
<feature type="disulfide bond" evidence="1">
    <location>
        <begin position="58"/>
        <end position="72"/>
    </location>
</feature>
<accession>D6C4L9</accession>
<proteinExistence type="inferred from homology"/>
<name>CU92_CONCL</name>
<reference key="1">
    <citation type="journal article" date="2010" name="Mol. Phylogenet. Evol.">
        <title>Evolution of Conus peptide toxins: analysis of Conus californicus Reeve, 1844.</title>
        <authorList>
            <person name="Biggs J.S."/>
            <person name="Watkins M."/>
            <person name="Puillandre N."/>
            <person name="Ownby J.P."/>
            <person name="Lopez-Vera E."/>
            <person name="Christensen S."/>
            <person name="Moreno K.J."/>
            <person name="Bernaldez J."/>
            <person name="Licea-Navarro A."/>
            <person name="Corneli P.S."/>
            <person name="Olivera B.M."/>
        </authorList>
    </citation>
    <scope>NUCLEOTIDE SEQUENCE [GENOMIC DNA]</scope>
</reference>
<comment type="subcellular location">
    <subcellularLocation>
        <location evidence="1">Secreted</location>
    </subcellularLocation>
</comment>
<comment type="tissue specificity">
    <text>Expressed by the venom duct.</text>
</comment>
<comment type="domain">
    <text>The cysteine framework is IX (C-C-C-C-C-C).</text>
</comment>
<organism>
    <name type="scientific">Californiconus californicus</name>
    <name type="common">California cone</name>
    <name type="synonym">Conus californicus</name>
    <dbReference type="NCBI Taxonomy" id="1736779"/>
    <lineage>
        <taxon>Eukaryota</taxon>
        <taxon>Metazoa</taxon>
        <taxon>Spiralia</taxon>
        <taxon>Lophotrochozoa</taxon>
        <taxon>Mollusca</taxon>
        <taxon>Gastropoda</taxon>
        <taxon>Caenogastropoda</taxon>
        <taxon>Neogastropoda</taxon>
        <taxon>Conoidea</taxon>
        <taxon>Conidae</taxon>
        <taxon>Californiconus</taxon>
    </lineage>
</organism>